<keyword id="KW-0028">Amino-acid biosynthesis</keyword>
<keyword id="KW-0057">Aromatic amino acid biosynthesis</keyword>
<keyword id="KW-0274">FAD</keyword>
<keyword id="KW-0285">Flavoprotein</keyword>
<keyword id="KW-0288">FMN</keyword>
<keyword id="KW-0456">Lyase</keyword>
<keyword id="KW-0521">NADP</keyword>
<keyword id="KW-1185">Reference proteome</keyword>
<reference key="1">
    <citation type="journal article" date="2008" name="J. Bacteriol.">
        <title>Complete genome sequence of uropathogenic Proteus mirabilis, a master of both adherence and motility.</title>
        <authorList>
            <person name="Pearson M.M."/>
            <person name="Sebaihia M."/>
            <person name="Churcher C."/>
            <person name="Quail M.A."/>
            <person name="Seshasayee A.S."/>
            <person name="Luscombe N.M."/>
            <person name="Abdellah Z."/>
            <person name="Arrosmith C."/>
            <person name="Atkin B."/>
            <person name="Chillingworth T."/>
            <person name="Hauser H."/>
            <person name="Jagels K."/>
            <person name="Moule S."/>
            <person name="Mungall K."/>
            <person name="Norbertczak H."/>
            <person name="Rabbinowitsch E."/>
            <person name="Walker D."/>
            <person name="Whithead S."/>
            <person name="Thomson N.R."/>
            <person name="Rather P.N."/>
            <person name="Parkhill J."/>
            <person name="Mobley H.L.T."/>
        </authorList>
    </citation>
    <scope>NUCLEOTIDE SEQUENCE [LARGE SCALE GENOMIC DNA]</scope>
    <source>
        <strain>HI4320</strain>
    </source>
</reference>
<accession>B4EZG9</accession>
<gene>
    <name evidence="1" type="primary">aroC</name>
    <name type="ordered locus">PMI1802</name>
</gene>
<feature type="chain" id="PRO_1000115384" description="Chorismate synthase">
    <location>
        <begin position="1"/>
        <end position="361"/>
    </location>
</feature>
<feature type="binding site" evidence="1">
    <location>
        <position position="48"/>
    </location>
    <ligand>
        <name>NADP(+)</name>
        <dbReference type="ChEBI" id="CHEBI:58349"/>
    </ligand>
</feature>
<feature type="binding site" evidence="1">
    <location>
        <position position="54"/>
    </location>
    <ligand>
        <name>NADP(+)</name>
        <dbReference type="ChEBI" id="CHEBI:58349"/>
    </ligand>
</feature>
<feature type="binding site" evidence="1">
    <location>
        <begin position="125"/>
        <end position="127"/>
    </location>
    <ligand>
        <name>FMN</name>
        <dbReference type="ChEBI" id="CHEBI:58210"/>
    </ligand>
</feature>
<feature type="binding site" evidence="1">
    <location>
        <begin position="238"/>
        <end position="239"/>
    </location>
    <ligand>
        <name>FMN</name>
        <dbReference type="ChEBI" id="CHEBI:58210"/>
    </ligand>
</feature>
<feature type="binding site" evidence="1">
    <location>
        <position position="278"/>
    </location>
    <ligand>
        <name>FMN</name>
        <dbReference type="ChEBI" id="CHEBI:58210"/>
    </ligand>
</feature>
<feature type="binding site" evidence="1">
    <location>
        <begin position="293"/>
        <end position="297"/>
    </location>
    <ligand>
        <name>FMN</name>
        <dbReference type="ChEBI" id="CHEBI:58210"/>
    </ligand>
</feature>
<feature type="binding site" evidence="1">
    <location>
        <position position="319"/>
    </location>
    <ligand>
        <name>FMN</name>
        <dbReference type="ChEBI" id="CHEBI:58210"/>
    </ligand>
</feature>
<name>AROC_PROMH</name>
<evidence type="ECO:0000255" key="1">
    <source>
        <dbReference type="HAMAP-Rule" id="MF_00300"/>
    </source>
</evidence>
<protein>
    <recommendedName>
        <fullName evidence="1">Chorismate synthase</fullName>
        <shortName evidence="1">CS</shortName>
        <ecNumber evidence="1">4.2.3.5</ecNumber>
    </recommendedName>
    <alternativeName>
        <fullName evidence="1">5-enolpyruvylshikimate-3-phosphate phospholyase</fullName>
    </alternativeName>
</protein>
<dbReference type="EC" id="4.2.3.5" evidence="1"/>
<dbReference type="EMBL" id="AM942759">
    <property type="protein sequence ID" value="CAR43746.1"/>
    <property type="molecule type" value="Genomic_DNA"/>
</dbReference>
<dbReference type="RefSeq" id="WP_004243753.1">
    <property type="nucleotide sequence ID" value="NC_010554.1"/>
</dbReference>
<dbReference type="SMR" id="B4EZG9"/>
<dbReference type="EnsemblBacteria" id="CAR43746">
    <property type="protein sequence ID" value="CAR43746"/>
    <property type="gene ID" value="PMI1802"/>
</dbReference>
<dbReference type="GeneID" id="6800514"/>
<dbReference type="KEGG" id="pmr:PMI1802"/>
<dbReference type="eggNOG" id="COG0082">
    <property type="taxonomic scope" value="Bacteria"/>
</dbReference>
<dbReference type="HOGENOM" id="CLU_034547_0_2_6"/>
<dbReference type="UniPathway" id="UPA00053">
    <property type="reaction ID" value="UER00090"/>
</dbReference>
<dbReference type="Proteomes" id="UP000008319">
    <property type="component" value="Chromosome"/>
</dbReference>
<dbReference type="GO" id="GO:0005829">
    <property type="term" value="C:cytosol"/>
    <property type="evidence" value="ECO:0007669"/>
    <property type="project" value="TreeGrafter"/>
</dbReference>
<dbReference type="GO" id="GO:0004107">
    <property type="term" value="F:chorismate synthase activity"/>
    <property type="evidence" value="ECO:0007669"/>
    <property type="project" value="UniProtKB-UniRule"/>
</dbReference>
<dbReference type="GO" id="GO:0010181">
    <property type="term" value="F:FMN binding"/>
    <property type="evidence" value="ECO:0007669"/>
    <property type="project" value="TreeGrafter"/>
</dbReference>
<dbReference type="GO" id="GO:0008652">
    <property type="term" value="P:amino acid biosynthetic process"/>
    <property type="evidence" value="ECO:0007669"/>
    <property type="project" value="UniProtKB-KW"/>
</dbReference>
<dbReference type="GO" id="GO:0009073">
    <property type="term" value="P:aromatic amino acid family biosynthetic process"/>
    <property type="evidence" value="ECO:0007669"/>
    <property type="project" value="UniProtKB-KW"/>
</dbReference>
<dbReference type="GO" id="GO:0009423">
    <property type="term" value="P:chorismate biosynthetic process"/>
    <property type="evidence" value="ECO:0007669"/>
    <property type="project" value="UniProtKB-UniRule"/>
</dbReference>
<dbReference type="CDD" id="cd07304">
    <property type="entry name" value="Chorismate_synthase"/>
    <property type="match status" value="1"/>
</dbReference>
<dbReference type="FunFam" id="3.60.150.10:FF:000001">
    <property type="entry name" value="Chorismate synthase"/>
    <property type="match status" value="1"/>
</dbReference>
<dbReference type="Gene3D" id="3.60.150.10">
    <property type="entry name" value="Chorismate synthase AroC"/>
    <property type="match status" value="1"/>
</dbReference>
<dbReference type="HAMAP" id="MF_00300">
    <property type="entry name" value="Chorismate_synth"/>
    <property type="match status" value="1"/>
</dbReference>
<dbReference type="InterPro" id="IPR000453">
    <property type="entry name" value="Chorismate_synth"/>
</dbReference>
<dbReference type="InterPro" id="IPR035904">
    <property type="entry name" value="Chorismate_synth_AroC_sf"/>
</dbReference>
<dbReference type="InterPro" id="IPR020541">
    <property type="entry name" value="Chorismate_synthase_CS"/>
</dbReference>
<dbReference type="NCBIfam" id="TIGR00033">
    <property type="entry name" value="aroC"/>
    <property type="match status" value="1"/>
</dbReference>
<dbReference type="NCBIfam" id="NF003793">
    <property type="entry name" value="PRK05382.1"/>
    <property type="match status" value="1"/>
</dbReference>
<dbReference type="PANTHER" id="PTHR21085">
    <property type="entry name" value="CHORISMATE SYNTHASE"/>
    <property type="match status" value="1"/>
</dbReference>
<dbReference type="PANTHER" id="PTHR21085:SF0">
    <property type="entry name" value="CHORISMATE SYNTHASE"/>
    <property type="match status" value="1"/>
</dbReference>
<dbReference type="Pfam" id="PF01264">
    <property type="entry name" value="Chorismate_synt"/>
    <property type="match status" value="1"/>
</dbReference>
<dbReference type="PIRSF" id="PIRSF001456">
    <property type="entry name" value="Chorismate_synth"/>
    <property type="match status" value="1"/>
</dbReference>
<dbReference type="SUPFAM" id="SSF103263">
    <property type="entry name" value="Chorismate synthase, AroC"/>
    <property type="match status" value="1"/>
</dbReference>
<dbReference type="PROSITE" id="PS00787">
    <property type="entry name" value="CHORISMATE_SYNTHASE_1"/>
    <property type="match status" value="1"/>
</dbReference>
<dbReference type="PROSITE" id="PS00788">
    <property type="entry name" value="CHORISMATE_SYNTHASE_2"/>
    <property type="match status" value="1"/>
</dbReference>
<dbReference type="PROSITE" id="PS00789">
    <property type="entry name" value="CHORISMATE_SYNTHASE_3"/>
    <property type="match status" value="1"/>
</dbReference>
<sequence length="361" mass="38895">MAGNSIGQLFRVTTFGESHGTALGCIVDGVPPGLPLTQADLQVDLDRRKPGTSRYTTQRREPDQVRILSGVFNGVTTGTSIGLLIENTDQRSQDYSEIKDVFRPGHADYTYEQKYGLRDYRGGGRSSARETAMRVAAGAIAKKYLKQKFGIEVKGYLSQLGPISCELVDWSIVETNPFFCPDPSRLDALDEYMRALKKEGNSIGAKVTVVAEGVPAGLGEPVFDRLDADLAHALMSINAVKGVEIGDGFDVVTLKGTENRDEITKEGFSSNHAGGVLGGISSGQPIIAHIALKPTSSITIAGKTLNRQGEEVDMITKGRHDPCVGIRAVPIAEAMMAIVLLDHALRQRGQCGDVIPPLMQW</sequence>
<organism>
    <name type="scientific">Proteus mirabilis (strain HI4320)</name>
    <dbReference type="NCBI Taxonomy" id="529507"/>
    <lineage>
        <taxon>Bacteria</taxon>
        <taxon>Pseudomonadati</taxon>
        <taxon>Pseudomonadota</taxon>
        <taxon>Gammaproteobacteria</taxon>
        <taxon>Enterobacterales</taxon>
        <taxon>Morganellaceae</taxon>
        <taxon>Proteus</taxon>
    </lineage>
</organism>
<comment type="function">
    <text evidence="1">Catalyzes the anti-1,4-elimination of the C-3 phosphate and the C-6 proR hydrogen from 5-enolpyruvylshikimate-3-phosphate (EPSP) to yield chorismate, which is the branch point compound that serves as the starting substrate for the three terminal pathways of aromatic amino acid biosynthesis. This reaction introduces a second double bond into the aromatic ring system.</text>
</comment>
<comment type="catalytic activity">
    <reaction evidence="1">
        <text>5-O-(1-carboxyvinyl)-3-phosphoshikimate = chorismate + phosphate</text>
        <dbReference type="Rhea" id="RHEA:21020"/>
        <dbReference type="ChEBI" id="CHEBI:29748"/>
        <dbReference type="ChEBI" id="CHEBI:43474"/>
        <dbReference type="ChEBI" id="CHEBI:57701"/>
        <dbReference type="EC" id="4.2.3.5"/>
    </reaction>
</comment>
<comment type="cofactor">
    <cofactor evidence="1">
        <name>FMNH2</name>
        <dbReference type="ChEBI" id="CHEBI:57618"/>
    </cofactor>
    <text evidence="1">Reduced FMN (FMNH(2)).</text>
</comment>
<comment type="pathway">
    <text evidence="1">Metabolic intermediate biosynthesis; chorismate biosynthesis; chorismate from D-erythrose 4-phosphate and phosphoenolpyruvate: step 7/7.</text>
</comment>
<comment type="subunit">
    <text evidence="1">Homotetramer.</text>
</comment>
<comment type="similarity">
    <text evidence="1">Belongs to the chorismate synthase family.</text>
</comment>
<proteinExistence type="inferred from homology"/>